<accession>P53291</accession>
<accession>A0A1S0T084</accession>
<sequence length="111" mass="13193">MIVEPMTKPRKPTVQRCQSFFTNGANHFYCKKSTHDGGRTHNLLIRSQTRCHYATRATVCWKFSIINKYIPTLANITITTLRKLYKRFIDRESLFLIFFRKDEHIVQNIIN</sequence>
<protein>
    <recommendedName>
        <fullName>Uncharacterized protein YGR164W</fullName>
    </recommendedName>
</protein>
<feature type="chain" id="PRO_0000202836" description="Uncharacterized protein YGR164W">
    <location>
        <begin position="1"/>
        <end position="111"/>
    </location>
</feature>
<name>YG3U_YEAST</name>
<keyword id="KW-1185">Reference proteome</keyword>
<reference key="1">
    <citation type="journal article" date="1997" name="Yeast">
        <title>Sequence analysis of 203 kilobases from Saccharomyces cerevisiae chromosome VII.</title>
        <authorList>
            <person name="Rieger M."/>
            <person name="Brueckner M."/>
            <person name="Schaefer M."/>
            <person name="Mueller-Auer S."/>
        </authorList>
    </citation>
    <scope>NUCLEOTIDE SEQUENCE [GENOMIC DNA]</scope>
    <source>
        <strain>ATCC 204508 / S288c</strain>
    </source>
</reference>
<reference key="2">
    <citation type="journal article" date="1997" name="Nature">
        <title>The nucleotide sequence of Saccharomyces cerevisiae chromosome VII.</title>
        <authorList>
            <person name="Tettelin H."/>
            <person name="Agostoni-Carbone M.L."/>
            <person name="Albermann K."/>
            <person name="Albers M."/>
            <person name="Arroyo J."/>
            <person name="Backes U."/>
            <person name="Barreiros T."/>
            <person name="Bertani I."/>
            <person name="Bjourson A.J."/>
            <person name="Brueckner M."/>
            <person name="Bruschi C.V."/>
            <person name="Carignani G."/>
            <person name="Castagnoli L."/>
            <person name="Cerdan E."/>
            <person name="Clemente M.L."/>
            <person name="Coblenz A."/>
            <person name="Coglievina M."/>
            <person name="Coissac E."/>
            <person name="Defoor E."/>
            <person name="Del Bino S."/>
            <person name="Delius H."/>
            <person name="Delneri D."/>
            <person name="de Wergifosse P."/>
            <person name="Dujon B."/>
            <person name="Durand P."/>
            <person name="Entian K.-D."/>
            <person name="Eraso P."/>
            <person name="Escribano V."/>
            <person name="Fabiani L."/>
            <person name="Fartmann B."/>
            <person name="Feroli F."/>
            <person name="Feuermann M."/>
            <person name="Frontali L."/>
            <person name="Garcia-Gonzalez M."/>
            <person name="Garcia-Saez M.I."/>
            <person name="Goffeau A."/>
            <person name="Guerreiro P."/>
            <person name="Hani J."/>
            <person name="Hansen M."/>
            <person name="Hebling U."/>
            <person name="Hernandez K."/>
            <person name="Heumann K."/>
            <person name="Hilger F."/>
            <person name="Hofmann B."/>
            <person name="Indge K.J."/>
            <person name="James C.M."/>
            <person name="Klima R."/>
            <person name="Koetter P."/>
            <person name="Kramer B."/>
            <person name="Kramer W."/>
            <person name="Lauquin G."/>
            <person name="Leuther H."/>
            <person name="Louis E.J."/>
            <person name="Maillier E."/>
            <person name="Marconi A."/>
            <person name="Martegani E."/>
            <person name="Mazon M.J."/>
            <person name="Mazzoni C."/>
            <person name="McReynolds A.D.K."/>
            <person name="Melchioretto P."/>
            <person name="Mewes H.-W."/>
            <person name="Minenkova O."/>
            <person name="Mueller-Auer S."/>
            <person name="Nawrocki A."/>
            <person name="Netter P."/>
            <person name="Neu R."/>
            <person name="Nombela C."/>
            <person name="Oliver S.G."/>
            <person name="Panzeri L."/>
            <person name="Paoluzi S."/>
            <person name="Plevani P."/>
            <person name="Portetelle D."/>
            <person name="Portillo F."/>
            <person name="Potier S."/>
            <person name="Purnelle B."/>
            <person name="Rieger M."/>
            <person name="Riles L."/>
            <person name="Rinaldi T."/>
            <person name="Robben J."/>
            <person name="Rodrigues-Pousada C."/>
            <person name="Rodriguez-Belmonte E."/>
            <person name="Rodriguez-Torres A.M."/>
            <person name="Rose M."/>
            <person name="Ruzzi M."/>
            <person name="Saliola M."/>
            <person name="Sanchez-Perez M."/>
            <person name="Schaefer B."/>
            <person name="Schaefer M."/>
            <person name="Scharfe M."/>
            <person name="Schmidheini T."/>
            <person name="Schreer A."/>
            <person name="Skala J."/>
            <person name="Souciet J.-L."/>
            <person name="Steensma H.Y."/>
            <person name="Talla E."/>
            <person name="Thierry A."/>
            <person name="Vandenbol M."/>
            <person name="van der Aart Q.J.M."/>
            <person name="Van Dyck L."/>
            <person name="Vanoni M."/>
            <person name="Verhasselt P."/>
            <person name="Voet M."/>
            <person name="Volckaert G."/>
            <person name="Wambutt R."/>
            <person name="Watson M.D."/>
            <person name="Weber N."/>
            <person name="Wedler E."/>
            <person name="Wedler H."/>
            <person name="Wipfli P."/>
            <person name="Wolf K."/>
            <person name="Wright L.F."/>
            <person name="Zaccaria P."/>
            <person name="Zimmermann M."/>
            <person name="Zollner A."/>
            <person name="Kleine K."/>
        </authorList>
    </citation>
    <scope>NUCLEOTIDE SEQUENCE [LARGE SCALE GENOMIC DNA]</scope>
    <source>
        <strain>ATCC 204508 / S288c</strain>
    </source>
</reference>
<reference key="3">
    <citation type="journal article" date="2014" name="G3 (Bethesda)">
        <title>The reference genome sequence of Saccharomyces cerevisiae: Then and now.</title>
        <authorList>
            <person name="Engel S.R."/>
            <person name="Dietrich F.S."/>
            <person name="Fisk D.G."/>
            <person name="Binkley G."/>
            <person name="Balakrishnan R."/>
            <person name="Costanzo M.C."/>
            <person name="Dwight S.S."/>
            <person name="Hitz B.C."/>
            <person name="Karra K."/>
            <person name="Nash R.S."/>
            <person name="Weng S."/>
            <person name="Wong E.D."/>
            <person name="Lloyd P."/>
            <person name="Skrzypek M.S."/>
            <person name="Miyasato S.R."/>
            <person name="Simison M."/>
            <person name="Cherry J.M."/>
        </authorList>
    </citation>
    <scope>GENOME REANNOTATION</scope>
    <source>
        <strain>ATCC 204508 / S288c</strain>
    </source>
</reference>
<gene>
    <name type="ordered locus">YGR164W</name>
</gene>
<organism>
    <name type="scientific">Saccharomyces cerevisiae (strain ATCC 204508 / S288c)</name>
    <name type="common">Baker's yeast</name>
    <dbReference type="NCBI Taxonomy" id="559292"/>
    <lineage>
        <taxon>Eukaryota</taxon>
        <taxon>Fungi</taxon>
        <taxon>Dikarya</taxon>
        <taxon>Ascomycota</taxon>
        <taxon>Saccharomycotina</taxon>
        <taxon>Saccharomycetes</taxon>
        <taxon>Saccharomycetales</taxon>
        <taxon>Saccharomycetaceae</taxon>
        <taxon>Saccharomyces</taxon>
    </lineage>
</organism>
<proteinExistence type="predicted"/>
<dbReference type="EMBL" id="Z72949">
    <property type="protein sequence ID" value="CAA97188.1"/>
    <property type="molecule type" value="Genomic_DNA"/>
</dbReference>
<dbReference type="EMBL" id="Z72950">
    <property type="protein sequence ID" value="CAA97190.1"/>
    <property type="molecule type" value="Genomic_DNA"/>
</dbReference>
<dbReference type="EMBL" id="BK006941">
    <property type="protein sequence ID" value="DAA80303.1"/>
    <property type="molecule type" value="Genomic_DNA"/>
</dbReference>
<dbReference type="PIR" id="S64475">
    <property type="entry name" value="S64475"/>
</dbReference>
<dbReference type="RefSeq" id="NP_001335783.1">
    <property type="nucleotide sequence ID" value="NM_001348843.1"/>
</dbReference>
<dbReference type="FunCoup" id="P53291">
    <property type="interactions" value="27"/>
</dbReference>
<dbReference type="STRING" id="4932.YGR164W"/>
<dbReference type="PaxDb" id="4932-YGR164W"/>
<dbReference type="EnsemblFungi" id="YGR164W_mRNA">
    <property type="protein sequence ID" value="YGR164W"/>
    <property type="gene ID" value="YGR164W"/>
</dbReference>
<dbReference type="GeneID" id="853073"/>
<dbReference type="AGR" id="SGD:S000003396"/>
<dbReference type="SGD" id="S000003396">
    <property type="gene designation" value="YGR164W"/>
</dbReference>
<dbReference type="HOGENOM" id="CLU_2160375_0_0_1"/>
<dbReference type="InParanoid" id="P53291"/>
<dbReference type="PRO" id="PR:P53291"/>
<dbReference type="Proteomes" id="UP000002311">
    <property type="component" value="Chromosome VII"/>
</dbReference>
<dbReference type="RNAct" id="P53291">
    <property type="molecule type" value="protein"/>
</dbReference>